<reference key="1">
    <citation type="journal article" date="2003" name="Lancet">
        <title>Genome sequence of Vibrio parahaemolyticus: a pathogenic mechanism distinct from that of V. cholerae.</title>
        <authorList>
            <person name="Makino K."/>
            <person name="Oshima K."/>
            <person name="Kurokawa K."/>
            <person name="Yokoyama K."/>
            <person name="Uda T."/>
            <person name="Tagomori K."/>
            <person name="Iijima Y."/>
            <person name="Najima M."/>
            <person name="Nakano M."/>
            <person name="Yamashita A."/>
            <person name="Kubota Y."/>
            <person name="Kimura S."/>
            <person name="Yasunaga T."/>
            <person name="Honda T."/>
            <person name="Shinagawa H."/>
            <person name="Hattori M."/>
            <person name="Iida T."/>
        </authorList>
    </citation>
    <scope>NUCLEOTIDE SEQUENCE [LARGE SCALE GENOMIC DNA]</scope>
    <source>
        <strain>RIMD 2210633</strain>
    </source>
</reference>
<accession>Q87MD4</accession>
<gene>
    <name type="primary">truC</name>
    <name type="ordered locus">VP2322</name>
</gene>
<protein>
    <recommendedName>
        <fullName>tRNA pseudouridine synthase C</fullName>
        <ecNumber>5.4.99.26</ecNumber>
    </recommendedName>
    <alternativeName>
        <fullName>tRNA pseudouridine(65) synthase</fullName>
    </alternativeName>
    <alternativeName>
        <fullName>tRNA pseudouridylate synthase C</fullName>
    </alternativeName>
    <alternativeName>
        <fullName>tRNA-uridine isomerase C</fullName>
    </alternativeName>
</protein>
<proteinExistence type="inferred from homology"/>
<evidence type="ECO:0000250" key="1"/>
<evidence type="ECO:0000305" key="2"/>
<sequence length="246" mass="28712">MAPVELEIVYQDEYFVAVNKPAGMLVHRSWLDKHETQFVMQTLRDQIGQHVFPLHRLDRPTSGVLVFALSSEVASQVMPMFAEHKMEKTYHAIVRGWIEEEGVLDYALKVELDKIADKFASQEKEAQEAVTAYKPLAKVEVPYSTGKFPTTRYCLMEMKPKTGRKHQLRRHMAHLRHPIVGDTSHGDGKHNKLFRNEFDSHRLLLHASELRFVHPFTNEELVMKASIDDTWQQLFTRFEWDEELVK</sequence>
<name>TRUC_VIBPA</name>
<feature type="chain" id="PRO_0000162721" description="tRNA pseudouridine synthase C">
    <location>
        <begin position="1"/>
        <end position="246"/>
    </location>
</feature>
<feature type="active site" evidence="1">
    <location>
        <position position="58"/>
    </location>
</feature>
<organism>
    <name type="scientific">Vibrio parahaemolyticus serotype O3:K6 (strain RIMD 2210633)</name>
    <dbReference type="NCBI Taxonomy" id="223926"/>
    <lineage>
        <taxon>Bacteria</taxon>
        <taxon>Pseudomonadati</taxon>
        <taxon>Pseudomonadota</taxon>
        <taxon>Gammaproteobacteria</taxon>
        <taxon>Vibrionales</taxon>
        <taxon>Vibrionaceae</taxon>
        <taxon>Vibrio</taxon>
    </lineage>
</organism>
<comment type="function">
    <text evidence="1">Responsible for synthesis of pseudouridine from uracil-65 in transfer RNAs.</text>
</comment>
<comment type="catalytic activity">
    <reaction>
        <text>uridine(65) in tRNA = pseudouridine(65) in tRNA</text>
        <dbReference type="Rhea" id="RHEA:42536"/>
        <dbReference type="Rhea" id="RHEA-COMP:10103"/>
        <dbReference type="Rhea" id="RHEA-COMP:10104"/>
        <dbReference type="ChEBI" id="CHEBI:65314"/>
        <dbReference type="ChEBI" id="CHEBI:65315"/>
        <dbReference type="EC" id="5.4.99.26"/>
    </reaction>
</comment>
<comment type="similarity">
    <text evidence="2">Belongs to the pseudouridine synthase RluA family.</text>
</comment>
<keyword id="KW-0413">Isomerase</keyword>
<keyword id="KW-0819">tRNA processing</keyword>
<dbReference type="EC" id="5.4.99.26"/>
<dbReference type="EMBL" id="BA000031">
    <property type="protein sequence ID" value="BAC60585.1"/>
    <property type="molecule type" value="Genomic_DNA"/>
</dbReference>
<dbReference type="RefSeq" id="NP_798701.1">
    <property type="nucleotide sequence ID" value="NC_004603.1"/>
</dbReference>
<dbReference type="SMR" id="Q87MD4"/>
<dbReference type="KEGG" id="vpa:VP2322"/>
<dbReference type="PATRIC" id="fig|223926.6.peg.2224"/>
<dbReference type="eggNOG" id="COG0564">
    <property type="taxonomic scope" value="Bacteria"/>
</dbReference>
<dbReference type="HOGENOM" id="CLU_016902_11_4_6"/>
<dbReference type="Proteomes" id="UP000002493">
    <property type="component" value="Chromosome 1"/>
</dbReference>
<dbReference type="GO" id="GO:0003723">
    <property type="term" value="F:RNA binding"/>
    <property type="evidence" value="ECO:0007669"/>
    <property type="project" value="InterPro"/>
</dbReference>
<dbReference type="GO" id="GO:0160149">
    <property type="term" value="F:tRNA pseudouridine(65) synthase activity"/>
    <property type="evidence" value="ECO:0007669"/>
    <property type="project" value="UniProtKB-EC"/>
</dbReference>
<dbReference type="GO" id="GO:0000455">
    <property type="term" value="P:enzyme-directed rRNA pseudouridine synthesis"/>
    <property type="evidence" value="ECO:0007669"/>
    <property type="project" value="TreeGrafter"/>
</dbReference>
<dbReference type="GO" id="GO:0008033">
    <property type="term" value="P:tRNA processing"/>
    <property type="evidence" value="ECO:0007669"/>
    <property type="project" value="UniProtKB-KW"/>
</dbReference>
<dbReference type="CDD" id="cd02563">
    <property type="entry name" value="PseudoU_synth_TruC"/>
    <property type="match status" value="1"/>
</dbReference>
<dbReference type="FunFam" id="3.30.2350.10:FF:000008">
    <property type="entry name" value="tRNA pseudouridine synthase C"/>
    <property type="match status" value="1"/>
</dbReference>
<dbReference type="Gene3D" id="3.30.2350.10">
    <property type="entry name" value="Pseudouridine synthase"/>
    <property type="match status" value="1"/>
</dbReference>
<dbReference type="InterPro" id="IPR020103">
    <property type="entry name" value="PsdUridine_synth_cat_dom_sf"/>
</dbReference>
<dbReference type="InterPro" id="IPR006224">
    <property type="entry name" value="PsdUridine_synth_RluA-like_CS"/>
</dbReference>
<dbReference type="InterPro" id="IPR006145">
    <property type="entry name" value="PsdUridine_synth_RsuA/RluA"/>
</dbReference>
<dbReference type="InterPro" id="IPR050188">
    <property type="entry name" value="RluA_PseudoU_synthase"/>
</dbReference>
<dbReference type="NCBIfam" id="NF008321">
    <property type="entry name" value="PRK11112.1"/>
    <property type="match status" value="1"/>
</dbReference>
<dbReference type="PANTHER" id="PTHR21600">
    <property type="entry name" value="MITOCHONDRIAL RNA PSEUDOURIDINE SYNTHASE"/>
    <property type="match status" value="1"/>
</dbReference>
<dbReference type="PANTHER" id="PTHR21600:SF56">
    <property type="entry name" value="TRNA PSEUDOURIDINE SYNTHASE C"/>
    <property type="match status" value="1"/>
</dbReference>
<dbReference type="Pfam" id="PF00849">
    <property type="entry name" value="PseudoU_synth_2"/>
    <property type="match status" value="1"/>
</dbReference>
<dbReference type="SUPFAM" id="SSF55120">
    <property type="entry name" value="Pseudouridine synthase"/>
    <property type="match status" value="1"/>
</dbReference>
<dbReference type="PROSITE" id="PS01129">
    <property type="entry name" value="PSI_RLU"/>
    <property type="match status" value="1"/>
</dbReference>